<name>KDSB_ACAM1</name>
<evidence type="ECO:0000255" key="1">
    <source>
        <dbReference type="HAMAP-Rule" id="MF_00057"/>
    </source>
</evidence>
<reference key="1">
    <citation type="journal article" date="2008" name="Proc. Natl. Acad. Sci. U.S.A.">
        <title>Niche adaptation and genome expansion in the chlorophyll d-producing cyanobacterium Acaryochloris marina.</title>
        <authorList>
            <person name="Swingley W.D."/>
            <person name="Chen M."/>
            <person name="Cheung P.C."/>
            <person name="Conrad A.L."/>
            <person name="Dejesa L.C."/>
            <person name="Hao J."/>
            <person name="Honchak B.M."/>
            <person name="Karbach L.E."/>
            <person name="Kurdoglu A."/>
            <person name="Lahiri S."/>
            <person name="Mastrian S.D."/>
            <person name="Miyashita H."/>
            <person name="Page L."/>
            <person name="Ramakrishna P."/>
            <person name="Satoh S."/>
            <person name="Sattley W.M."/>
            <person name="Shimada Y."/>
            <person name="Taylor H.L."/>
            <person name="Tomo T."/>
            <person name="Tsuchiya T."/>
            <person name="Wang Z.T."/>
            <person name="Raymond J."/>
            <person name="Mimuro M."/>
            <person name="Blankenship R.E."/>
            <person name="Touchman J.W."/>
        </authorList>
    </citation>
    <scope>NUCLEOTIDE SEQUENCE [LARGE SCALE GENOMIC DNA]</scope>
    <source>
        <strain>MBIC 11017</strain>
    </source>
</reference>
<protein>
    <recommendedName>
        <fullName evidence="1">3-deoxy-manno-octulosonate cytidylyltransferase</fullName>
        <ecNumber evidence="1">2.7.7.38</ecNumber>
    </recommendedName>
    <alternativeName>
        <fullName evidence="1">CMP-2-keto-3-deoxyoctulosonic acid synthase</fullName>
        <shortName evidence="1">CKS</shortName>
        <shortName evidence="1">CMP-KDO synthase</shortName>
    </alternativeName>
</protein>
<organism>
    <name type="scientific">Acaryochloris marina (strain MBIC 11017)</name>
    <dbReference type="NCBI Taxonomy" id="329726"/>
    <lineage>
        <taxon>Bacteria</taxon>
        <taxon>Bacillati</taxon>
        <taxon>Cyanobacteriota</taxon>
        <taxon>Cyanophyceae</taxon>
        <taxon>Acaryochloridales</taxon>
        <taxon>Acaryochloridaceae</taxon>
        <taxon>Acaryochloris</taxon>
    </lineage>
</organism>
<accession>B0BZZ7</accession>
<feature type="chain" id="PRO_1000091849" description="3-deoxy-manno-octulosonate cytidylyltransferase">
    <location>
        <begin position="1"/>
        <end position="245"/>
    </location>
</feature>
<proteinExistence type="inferred from homology"/>
<dbReference type="EC" id="2.7.7.38" evidence="1"/>
<dbReference type="EMBL" id="CP000828">
    <property type="protein sequence ID" value="ABW27207.1"/>
    <property type="molecule type" value="Genomic_DNA"/>
</dbReference>
<dbReference type="RefSeq" id="WP_012162683.1">
    <property type="nucleotide sequence ID" value="NC_009925.1"/>
</dbReference>
<dbReference type="SMR" id="B0BZZ7"/>
<dbReference type="STRING" id="329726.AM1_2194"/>
<dbReference type="KEGG" id="amr:AM1_2194"/>
<dbReference type="eggNOG" id="COG1212">
    <property type="taxonomic scope" value="Bacteria"/>
</dbReference>
<dbReference type="HOGENOM" id="CLU_065038_0_1_3"/>
<dbReference type="OrthoDB" id="9815559at2"/>
<dbReference type="UniPathway" id="UPA00030"/>
<dbReference type="UniPathway" id="UPA00358">
    <property type="reaction ID" value="UER00476"/>
</dbReference>
<dbReference type="Proteomes" id="UP000000268">
    <property type="component" value="Chromosome"/>
</dbReference>
<dbReference type="GO" id="GO:0005829">
    <property type="term" value="C:cytosol"/>
    <property type="evidence" value="ECO:0007669"/>
    <property type="project" value="TreeGrafter"/>
</dbReference>
<dbReference type="GO" id="GO:0008690">
    <property type="term" value="F:3-deoxy-manno-octulosonate cytidylyltransferase activity"/>
    <property type="evidence" value="ECO:0007669"/>
    <property type="project" value="UniProtKB-UniRule"/>
</dbReference>
<dbReference type="GO" id="GO:0033468">
    <property type="term" value="P:CMP-keto-3-deoxy-D-manno-octulosonic acid biosynthetic process"/>
    <property type="evidence" value="ECO:0007669"/>
    <property type="project" value="UniProtKB-UniRule"/>
</dbReference>
<dbReference type="GO" id="GO:0009103">
    <property type="term" value="P:lipopolysaccharide biosynthetic process"/>
    <property type="evidence" value="ECO:0007669"/>
    <property type="project" value="UniProtKB-UniRule"/>
</dbReference>
<dbReference type="CDD" id="cd02517">
    <property type="entry name" value="CMP-KDO-Synthetase"/>
    <property type="match status" value="1"/>
</dbReference>
<dbReference type="FunFam" id="3.90.550.10:FF:000011">
    <property type="entry name" value="3-deoxy-manno-octulosonate cytidylyltransferase"/>
    <property type="match status" value="1"/>
</dbReference>
<dbReference type="Gene3D" id="3.90.550.10">
    <property type="entry name" value="Spore Coat Polysaccharide Biosynthesis Protein SpsA, Chain A"/>
    <property type="match status" value="1"/>
</dbReference>
<dbReference type="HAMAP" id="MF_00057">
    <property type="entry name" value="KdsB"/>
    <property type="match status" value="1"/>
</dbReference>
<dbReference type="InterPro" id="IPR003329">
    <property type="entry name" value="Cytidylyl_trans"/>
</dbReference>
<dbReference type="InterPro" id="IPR004528">
    <property type="entry name" value="KdsB"/>
</dbReference>
<dbReference type="InterPro" id="IPR029044">
    <property type="entry name" value="Nucleotide-diphossugar_trans"/>
</dbReference>
<dbReference type="NCBIfam" id="TIGR00466">
    <property type="entry name" value="kdsB"/>
    <property type="match status" value="1"/>
</dbReference>
<dbReference type="NCBIfam" id="NF003950">
    <property type="entry name" value="PRK05450.1-3"/>
    <property type="match status" value="1"/>
</dbReference>
<dbReference type="NCBIfam" id="NF003952">
    <property type="entry name" value="PRK05450.1-5"/>
    <property type="match status" value="1"/>
</dbReference>
<dbReference type="NCBIfam" id="NF009905">
    <property type="entry name" value="PRK13368.1"/>
    <property type="match status" value="1"/>
</dbReference>
<dbReference type="PANTHER" id="PTHR42866">
    <property type="entry name" value="3-DEOXY-MANNO-OCTULOSONATE CYTIDYLYLTRANSFERASE"/>
    <property type="match status" value="1"/>
</dbReference>
<dbReference type="PANTHER" id="PTHR42866:SF2">
    <property type="entry name" value="3-DEOXY-MANNO-OCTULOSONATE CYTIDYLYLTRANSFERASE, MITOCHONDRIAL"/>
    <property type="match status" value="1"/>
</dbReference>
<dbReference type="Pfam" id="PF02348">
    <property type="entry name" value="CTP_transf_3"/>
    <property type="match status" value="1"/>
</dbReference>
<dbReference type="SUPFAM" id="SSF53448">
    <property type="entry name" value="Nucleotide-diphospho-sugar transferases"/>
    <property type="match status" value="1"/>
</dbReference>
<sequence>MNILAVIPARYQSQRFPGKPLVMLDERPMVQWVYEAAKSCDFFQDAVVATDSDKIADCVKGFGGKVVMTRDDHLTGTDRVAEVAGFYDDMDVVVNVQGDQPFVTPEALEQLVRPYREGERPEMTTLGCPLDMDEDYASPNAVKVLCDRNGHALYFSRSPIPYFRTQGTVPVYHHLGLYAFRHDFLMQYSQLEPTPFETCEGLEQLRVLEYGYAIKVCQTQKAAIEINTPEDLVKAQLFIQQGMTS</sequence>
<keyword id="KW-0963">Cytoplasm</keyword>
<keyword id="KW-0448">Lipopolysaccharide biosynthesis</keyword>
<keyword id="KW-0548">Nucleotidyltransferase</keyword>
<keyword id="KW-1185">Reference proteome</keyword>
<keyword id="KW-0808">Transferase</keyword>
<gene>
    <name evidence="1" type="primary">kdsB</name>
    <name type="ordered locus">AM1_2194</name>
</gene>
<comment type="function">
    <text evidence="1">Activates KDO (a required 8-carbon sugar) for incorporation into bacterial lipopolysaccharide in Gram-negative bacteria.</text>
</comment>
<comment type="catalytic activity">
    <reaction evidence="1">
        <text>3-deoxy-alpha-D-manno-oct-2-ulosonate + CTP = CMP-3-deoxy-beta-D-manno-octulosonate + diphosphate</text>
        <dbReference type="Rhea" id="RHEA:23448"/>
        <dbReference type="ChEBI" id="CHEBI:33019"/>
        <dbReference type="ChEBI" id="CHEBI:37563"/>
        <dbReference type="ChEBI" id="CHEBI:85986"/>
        <dbReference type="ChEBI" id="CHEBI:85987"/>
        <dbReference type="EC" id="2.7.7.38"/>
    </reaction>
</comment>
<comment type="pathway">
    <text evidence="1">Nucleotide-sugar biosynthesis; CMP-3-deoxy-D-manno-octulosonate biosynthesis; CMP-3-deoxy-D-manno-octulosonate from 3-deoxy-D-manno-octulosonate and CTP: step 1/1.</text>
</comment>
<comment type="pathway">
    <text evidence="1">Bacterial outer membrane biogenesis; lipopolysaccharide biosynthesis.</text>
</comment>
<comment type="subcellular location">
    <subcellularLocation>
        <location evidence="1">Cytoplasm</location>
    </subcellularLocation>
</comment>
<comment type="similarity">
    <text evidence="1">Belongs to the KdsB family.</text>
</comment>